<sequence>MSFVTENPWLMVLTIFIINVCYVTFLTMRTILTLKGYRYIAASVSFLEVLVYIVGLGLVMSNLDHIQNIIAYAFGFSIGIIVGMKIEEKLALGYTVVNVTSAEYELDLPNELRNLGYGVTHYAAFGRDGSRMVMQILTPRKYERKLMDTIKNLDPKAFIIAYEPRNIHGGFWTKGIRRRKLKDYEPEELESVVEHEIQSK</sequence>
<feature type="chain" id="PRO_0000171953" description="UPF0316 protein SAR2004">
    <location>
        <begin position="1"/>
        <end position="200"/>
    </location>
</feature>
<feature type="transmembrane region" description="Helical" evidence="1">
    <location>
        <begin position="8"/>
        <end position="28"/>
    </location>
</feature>
<feature type="transmembrane region" description="Helical" evidence="1">
    <location>
        <begin position="40"/>
        <end position="60"/>
    </location>
</feature>
<feature type="transmembrane region" description="Helical" evidence="1">
    <location>
        <begin position="66"/>
        <end position="86"/>
    </location>
</feature>
<protein>
    <recommendedName>
        <fullName evidence="1">UPF0316 protein SAR2004</fullName>
    </recommendedName>
</protein>
<evidence type="ECO:0000255" key="1">
    <source>
        <dbReference type="HAMAP-Rule" id="MF_01515"/>
    </source>
</evidence>
<proteinExistence type="inferred from homology"/>
<name>Y2004_STAAR</name>
<organism>
    <name type="scientific">Staphylococcus aureus (strain MRSA252)</name>
    <dbReference type="NCBI Taxonomy" id="282458"/>
    <lineage>
        <taxon>Bacteria</taxon>
        <taxon>Bacillati</taxon>
        <taxon>Bacillota</taxon>
        <taxon>Bacilli</taxon>
        <taxon>Bacillales</taxon>
        <taxon>Staphylococcaceae</taxon>
        <taxon>Staphylococcus</taxon>
    </lineage>
</organism>
<accession>Q6GFE5</accession>
<reference key="1">
    <citation type="journal article" date="2004" name="Proc. Natl. Acad. Sci. U.S.A.">
        <title>Complete genomes of two clinical Staphylococcus aureus strains: evidence for the rapid evolution of virulence and drug resistance.</title>
        <authorList>
            <person name="Holden M.T.G."/>
            <person name="Feil E.J."/>
            <person name="Lindsay J.A."/>
            <person name="Peacock S.J."/>
            <person name="Day N.P.J."/>
            <person name="Enright M.C."/>
            <person name="Foster T.J."/>
            <person name="Moore C.E."/>
            <person name="Hurst L."/>
            <person name="Atkin R."/>
            <person name="Barron A."/>
            <person name="Bason N."/>
            <person name="Bentley S.D."/>
            <person name="Chillingworth C."/>
            <person name="Chillingworth T."/>
            <person name="Churcher C."/>
            <person name="Clark L."/>
            <person name="Corton C."/>
            <person name="Cronin A."/>
            <person name="Doggett J."/>
            <person name="Dowd L."/>
            <person name="Feltwell T."/>
            <person name="Hance Z."/>
            <person name="Harris B."/>
            <person name="Hauser H."/>
            <person name="Holroyd S."/>
            <person name="Jagels K."/>
            <person name="James K.D."/>
            <person name="Lennard N."/>
            <person name="Line A."/>
            <person name="Mayes R."/>
            <person name="Moule S."/>
            <person name="Mungall K."/>
            <person name="Ormond D."/>
            <person name="Quail M.A."/>
            <person name="Rabbinowitsch E."/>
            <person name="Rutherford K.M."/>
            <person name="Sanders M."/>
            <person name="Sharp S."/>
            <person name="Simmonds M."/>
            <person name="Stevens K."/>
            <person name="Whitehead S."/>
            <person name="Barrell B.G."/>
            <person name="Spratt B.G."/>
            <person name="Parkhill J."/>
        </authorList>
    </citation>
    <scope>NUCLEOTIDE SEQUENCE [LARGE SCALE GENOMIC DNA]</scope>
    <source>
        <strain>MRSA252</strain>
    </source>
</reference>
<comment type="subcellular location">
    <subcellularLocation>
        <location evidence="1">Cell membrane</location>
        <topology evidence="1">Multi-pass membrane protein</topology>
    </subcellularLocation>
</comment>
<comment type="similarity">
    <text evidence="1">Belongs to the UPF0316 family.</text>
</comment>
<gene>
    <name type="ordered locus">SAR2004</name>
</gene>
<dbReference type="EMBL" id="BX571856">
    <property type="protein sequence ID" value="CAG40989.1"/>
    <property type="molecule type" value="Genomic_DNA"/>
</dbReference>
<dbReference type="RefSeq" id="WP_000011542.1">
    <property type="nucleotide sequence ID" value="NC_002952.2"/>
</dbReference>
<dbReference type="SMR" id="Q6GFE5"/>
<dbReference type="KEGG" id="sar:SAR2004"/>
<dbReference type="HOGENOM" id="CLU_106166_1_0_9"/>
<dbReference type="Proteomes" id="UP000000596">
    <property type="component" value="Chromosome"/>
</dbReference>
<dbReference type="GO" id="GO:0005886">
    <property type="term" value="C:plasma membrane"/>
    <property type="evidence" value="ECO:0007669"/>
    <property type="project" value="UniProtKB-SubCell"/>
</dbReference>
<dbReference type="CDD" id="cd16381">
    <property type="entry name" value="YitT_C_like_1"/>
    <property type="match status" value="1"/>
</dbReference>
<dbReference type="HAMAP" id="MF_01515">
    <property type="entry name" value="UPF0316"/>
    <property type="match status" value="1"/>
</dbReference>
<dbReference type="InterPro" id="IPR019264">
    <property type="entry name" value="DUF2179"/>
</dbReference>
<dbReference type="InterPro" id="IPR044035">
    <property type="entry name" value="DUF5698"/>
</dbReference>
<dbReference type="InterPro" id="IPR022930">
    <property type="entry name" value="UPF0316"/>
</dbReference>
<dbReference type="NCBIfam" id="NF003190">
    <property type="entry name" value="PRK04164.1-1"/>
    <property type="match status" value="1"/>
</dbReference>
<dbReference type="NCBIfam" id="NF003194">
    <property type="entry name" value="PRK04164.1-5"/>
    <property type="match status" value="1"/>
</dbReference>
<dbReference type="PANTHER" id="PTHR40060">
    <property type="entry name" value="UPF0316 PROTEIN YEBE"/>
    <property type="match status" value="1"/>
</dbReference>
<dbReference type="PANTHER" id="PTHR40060:SF1">
    <property type="entry name" value="UPF0316 PROTEIN YEBE"/>
    <property type="match status" value="1"/>
</dbReference>
<dbReference type="Pfam" id="PF10035">
    <property type="entry name" value="DUF2179"/>
    <property type="match status" value="1"/>
</dbReference>
<dbReference type="Pfam" id="PF18955">
    <property type="entry name" value="DUF5698"/>
    <property type="match status" value="1"/>
</dbReference>
<keyword id="KW-1003">Cell membrane</keyword>
<keyword id="KW-0472">Membrane</keyword>
<keyword id="KW-0812">Transmembrane</keyword>
<keyword id="KW-1133">Transmembrane helix</keyword>